<dbReference type="EC" id="2.4.2.7" evidence="1"/>
<dbReference type="EMBL" id="CP001034">
    <property type="protein sequence ID" value="ACB84531.1"/>
    <property type="molecule type" value="Genomic_DNA"/>
</dbReference>
<dbReference type="RefSeq" id="WP_012447409.1">
    <property type="nucleotide sequence ID" value="NC_010718.1"/>
</dbReference>
<dbReference type="SMR" id="B2A0H0"/>
<dbReference type="FunCoup" id="B2A0H0">
    <property type="interactions" value="301"/>
</dbReference>
<dbReference type="STRING" id="457570.Nther_0946"/>
<dbReference type="KEGG" id="nth:Nther_0946"/>
<dbReference type="eggNOG" id="COG0503">
    <property type="taxonomic scope" value="Bacteria"/>
</dbReference>
<dbReference type="HOGENOM" id="CLU_063339_3_0_9"/>
<dbReference type="InParanoid" id="B2A0H0"/>
<dbReference type="OrthoDB" id="9803963at2"/>
<dbReference type="UniPathway" id="UPA00588">
    <property type="reaction ID" value="UER00646"/>
</dbReference>
<dbReference type="Proteomes" id="UP000001683">
    <property type="component" value="Chromosome"/>
</dbReference>
<dbReference type="GO" id="GO:0005737">
    <property type="term" value="C:cytoplasm"/>
    <property type="evidence" value="ECO:0007669"/>
    <property type="project" value="UniProtKB-SubCell"/>
</dbReference>
<dbReference type="GO" id="GO:0002055">
    <property type="term" value="F:adenine binding"/>
    <property type="evidence" value="ECO:0007669"/>
    <property type="project" value="TreeGrafter"/>
</dbReference>
<dbReference type="GO" id="GO:0003999">
    <property type="term" value="F:adenine phosphoribosyltransferase activity"/>
    <property type="evidence" value="ECO:0007669"/>
    <property type="project" value="UniProtKB-UniRule"/>
</dbReference>
<dbReference type="GO" id="GO:0016208">
    <property type="term" value="F:AMP binding"/>
    <property type="evidence" value="ECO:0007669"/>
    <property type="project" value="TreeGrafter"/>
</dbReference>
<dbReference type="GO" id="GO:0006168">
    <property type="term" value="P:adenine salvage"/>
    <property type="evidence" value="ECO:0007669"/>
    <property type="project" value="InterPro"/>
</dbReference>
<dbReference type="GO" id="GO:0044209">
    <property type="term" value="P:AMP salvage"/>
    <property type="evidence" value="ECO:0007669"/>
    <property type="project" value="UniProtKB-UniRule"/>
</dbReference>
<dbReference type="GO" id="GO:0006166">
    <property type="term" value="P:purine ribonucleoside salvage"/>
    <property type="evidence" value="ECO:0007669"/>
    <property type="project" value="UniProtKB-KW"/>
</dbReference>
<dbReference type="CDD" id="cd06223">
    <property type="entry name" value="PRTases_typeI"/>
    <property type="match status" value="1"/>
</dbReference>
<dbReference type="FunFam" id="3.40.50.2020:FF:000021">
    <property type="entry name" value="Adenine phosphoribosyltransferase"/>
    <property type="match status" value="1"/>
</dbReference>
<dbReference type="Gene3D" id="3.40.50.2020">
    <property type="match status" value="1"/>
</dbReference>
<dbReference type="HAMAP" id="MF_00004">
    <property type="entry name" value="Aden_phosphoribosyltr"/>
    <property type="match status" value="1"/>
</dbReference>
<dbReference type="InterPro" id="IPR005764">
    <property type="entry name" value="Ade_phspho_trans"/>
</dbReference>
<dbReference type="InterPro" id="IPR000836">
    <property type="entry name" value="PRibTrfase_dom"/>
</dbReference>
<dbReference type="InterPro" id="IPR029057">
    <property type="entry name" value="PRTase-like"/>
</dbReference>
<dbReference type="InterPro" id="IPR050054">
    <property type="entry name" value="UPRTase/APRTase"/>
</dbReference>
<dbReference type="NCBIfam" id="TIGR01090">
    <property type="entry name" value="apt"/>
    <property type="match status" value="1"/>
</dbReference>
<dbReference type="NCBIfam" id="NF002634">
    <property type="entry name" value="PRK02304.1-3"/>
    <property type="match status" value="1"/>
</dbReference>
<dbReference type="NCBIfam" id="NF002636">
    <property type="entry name" value="PRK02304.1-5"/>
    <property type="match status" value="1"/>
</dbReference>
<dbReference type="PANTHER" id="PTHR32315">
    <property type="entry name" value="ADENINE PHOSPHORIBOSYLTRANSFERASE"/>
    <property type="match status" value="1"/>
</dbReference>
<dbReference type="PANTHER" id="PTHR32315:SF3">
    <property type="entry name" value="ADENINE PHOSPHORIBOSYLTRANSFERASE"/>
    <property type="match status" value="1"/>
</dbReference>
<dbReference type="Pfam" id="PF00156">
    <property type="entry name" value="Pribosyltran"/>
    <property type="match status" value="1"/>
</dbReference>
<dbReference type="SUPFAM" id="SSF53271">
    <property type="entry name" value="PRTase-like"/>
    <property type="match status" value="1"/>
</dbReference>
<dbReference type="PROSITE" id="PS00103">
    <property type="entry name" value="PUR_PYR_PR_TRANSFER"/>
    <property type="match status" value="1"/>
</dbReference>
<accession>B2A0H0</accession>
<sequence>MLKLRDYIRDIPDFPKKGVVFKDITTALKDPELLAEIIINLSSHYEKEVPDKIVGIESRGFILGPAIAKELGAGFVPARKGGKLPSKTASQEYNTEYSTDVLEIHEDAIEKNERVLIVDDLLATGGTAQATAKIVEQLEGQVVGFAFMLELSFLKGREKIGDYPIKVLEQF</sequence>
<organism>
    <name type="scientific">Natranaerobius thermophilus (strain ATCC BAA-1301 / DSM 18059 / JW/NM-WN-LF)</name>
    <dbReference type="NCBI Taxonomy" id="457570"/>
    <lineage>
        <taxon>Bacteria</taxon>
        <taxon>Bacillati</taxon>
        <taxon>Bacillota</taxon>
        <taxon>Clostridia</taxon>
        <taxon>Natranaerobiales</taxon>
        <taxon>Natranaerobiaceae</taxon>
        <taxon>Natranaerobius</taxon>
    </lineage>
</organism>
<reference key="1">
    <citation type="submission" date="2008-04" db="EMBL/GenBank/DDBJ databases">
        <title>Complete sequence of chromosome of Natranaerobius thermophilus JW/NM-WN-LF.</title>
        <authorList>
            <consortium name="US DOE Joint Genome Institute"/>
            <person name="Copeland A."/>
            <person name="Lucas S."/>
            <person name="Lapidus A."/>
            <person name="Glavina del Rio T."/>
            <person name="Dalin E."/>
            <person name="Tice H."/>
            <person name="Bruce D."/>
            <person name="Goodwin L."/>
            <person name="Pitluck S."/>
            <person name="Chertkov O."/>
            <person name="Brettin T."/>
            <person name="Detter J.C."/>
            <person name="Han C."/>
            <person name="Kuske C.R."/>
            <person name="Schmutz J."/>
            <person name="Larimer F."/>
            <person name="Land M."/>
            <person name="Hauser L."/>
            <person name="Kyrpides N."/>
            <person name="Lykidis A."/>
            <person name="Mesbah N.M."/>
            <person name="Wiegel J."/>
        </authorList>
    </citation>
    <scope>NUCLEOTIDE SEQUENCE [LARGE SCALE GENOMIC DNA]</scope>
    <source>
        <strain>ATCC BAA-1301 / DSM 18059 / JW/NM-WN-LF</strain>
    </source>
</reference>
<proteinExistence type="inferred from homology"/>
<feature type="chain" id="PRO_1000201670" description="Adenine phosphoribosyltransferase">
    <location>
        <begin position="1"/>
        <end position="171"/>
    </location>
</feature>
<protein>
    <recommendedName>
        <fullName evidence="1">Adenine phosphoribosyltransferase</fullName>
        <shortName evidence="1">APRT</shortName>
        <ecNumber evidence="1">2.4.2.7</ecNumber>
    </recommendedName>
</protein>
<keyword id="KW-0963">Cytoplasm</keyword>
<keyword id="KW-0328">Glycosyltransferase</keyword>
<keyword id="KW-0660">Purine salvage</keyword>
<keyword id="KW-1185">Reference proteome</keyword>
<keyword id="KW-0808">Transferase</keyword>
<evidence type="ECO:0000255" key="1">
    <source>
        <dbReference type="HAMAP-Rule" id="MF_00004"/>
    </source>
</evidence>
<name>APT_NATTJ</name>
<comment type="function">
    <text evidence="1">Catalyzes a salvage reaction resulting in the formation of AMP, that is energically less costly than de novo synthesis.</text>
</comment>
<comment type="catalytic activity">
    <reaction evidence="1">
        <text>AMP + diphosphate = 5-phospho-alpha-D-ribose 1-diphosphate + adenine</text>
        <dbReference type="Rhea" id="RHEA:16609"/>
        <dbReference type="ChEBI" id="CHEBI:16708"/>
        <dbReference type="ChEBI" id="CHEBI:33019"/>
        <dbReference type="ChEBI" id="CHEBI:58017"/>
        <dbReference type="ChEBI" id="CHEBI:456215"/>
        <dbReference type="EC" id="2.4.2.7"/>
    </reaction>
</comment>
<comment type="pathway">
    <text evidence="1">Purine metabolism; AMP biosynthesis via salvage pathway; AMP from adenine: step 1/1.</text>
</comment>
<comment type="subunit">
    <text evidence="1">Homodimer.</text>
</comment>
<comment type="subcellular location">
    <subcellularLocation>
        <location evidence="1">Cytoplasm</location>
    </subcellularLocation>
</comment>
<comment type="similarity">
    <text evidence="1">Belongs to the purine/pyrimidine phosphoribosyltransferase family.</text>
</comment>
<gene>
    <name evidence="1" type="primary">apt</name>
    <name type="ordered locus">Nther_0946</name>
</gene>